<feature type="chain" id="PRO_0000297517" description="Alpha/beta hydrolase domain-containing protein 17C">
    <location>
        <begin position="1"/>
        <end position="311"/>
    </location>
</feature>
<feature type="region of interest" description="Disordered" evidence="7">
    <location>
        <begin position="48"/>
        <end position="67"/>
    </location>
</feature>
<feature type="active site" description="Charge relay system" evidence="6">
    <location>
        <position position="193"/>
    </location>
</feature>
<feature type="active site" description="Charge relay system" evidence="2">
    <location>
        <position position="258"/>
    </location>
</feature>
<feature type="active site" description="Charge relay system" evidence="2">
    <location>
        <position position="287"/>
    </location>
</feature>
<dbReference type="EC" id="3.1.2.22" evidence="5"/>
<dbReference type="EMBL" id="BC077755">
    <property type="protein sequence ID" value="AAH77755.1"/>
    <property type="molecule type" value="mRNA"/>
</dbReference>
<dbReference type="RefSeq" id="NP_001086920.1">
    <property type="nucleotide sequence ID" value="NM_001093451.1"/>
</dbReference>
<dbReference type="SMR" id="Q6DD70"/>
<dbReference type="ESTHER" id="xenla-q6dd70">
    <property type="family name" value="ABHD17-depalmitoylase"/>
</dbReference>
<dbReference type="DNASU" id="446755"/>
<dbReference type="GeneID" id="446755"/>
<dbReference type="KEGG" id="xla:446755"/>
<dbReference type="AGR" id="Xenbase:XB-GENE-6040950"/>
<dbReference type="CTD" id="446755"/>
<dbReference type="Xenbase" id="XB-GENE-6040950">
    <property type="gene designation" value="abhd17c.S"/>
</dbReference>
<dbReference type="OMA" id="QYGAKDE"/>
<dbReference type="OrthoDB" id="446723at2759"/>
<dbReference type="Proteomes" id="UP000186698">
    <property type="component" value="Chromosome 3S"/>
</dbReference>
<dbReference type="Bgee" id="446755">
    <property type="expression patterns" value="Expressed in egg cell and 19 other cell types or tissues"/>
</dbReference>
<dbReference type="GO" id="GO:0043197">
    <property type="term" value="C:dendritic spine"/>
    <property type="evidence" value="ECO:0007669"/>
    <property type="project" value="UniProtKB-SubCell"/>
</dbReference>
<dbReference type="GO" id="GO:0010008">
    <property type="term" value="C:endosome membrane"/>
    <property type="evidence" value="ECO:0000318"/>
    <property type="project" value="GO_Central"/>
</dbReference>
<dbReference type="GO" id="GO:0005886">
    <property type="term" value="C:plasma membrane"/>
    <property type="evidence" value="ECO:0000318"/>
    <property type="project" value="GO_Central"/>
</dbReference>
<dbReference type="GO" id="GO:0098839">
    <property type="term" value="C:postsynaptic density membrane"/>
    <property type="evidence" value="ECO:0007669"/>
    <property type="project" value="UniProtKB-SubCell"/>
</dbReference>
<dbReference type="GO" id="GO:0055038">
    <property type="term" value="C:recycling endosome membrane"/>
    <property type="evidence" value="ECO:0007669"/>
    <property type="project" value="UniProtKB-SubCell"/>
</dbReference>
<dbReference type="GO" id="GO:0008474">
    <property type="term" value="F:palmitoyl-(protein) hydrolase activity"/>
    <property type="evidence" value="ECO:0000318"/>
    <property type="project" value="GO_Central"/>
</dbReference>
<dbReference type="GO" id="GO:0099175">
    <property type="term" value="P:regulation of postsynapse organization"/>
    <property type="evidence" value="ECO:0000318"/>
    <property type="project" value="GO_Central"/>
</dbReference>
<dbReference type="FunFam" id="3.40.50.1820:FF:000008">
    <property type="entry name" value="Alpha/beta hydrolase domain-containing protein 17B"/>
    <property type="match status" value="1"/>
</dbReference>
<dbReference type="Gene3D" id="3.40.50.1820">
    <property type="entry name" value="alpha/beta hydrolase"/>
    <property type="match status" value="1"/>
</dbReference>
<dbReference type="InterPro" id="IPR029058">
    <property type="entry name" value="AB_hydrolase_fold"/>
</dbReference>
<dbReference type="InterPro" id="IPR022742">
    <property type="entry name" value="Hydrolase_4"/>
</dbReference>
<dbReference type="PANTHER" id="PTHR12277">
    <property type="entry name" value="ALPHA/BETA HYDROLASE DOMAIN-CONTAINING PROTEIN"/>
    <property type="match status" value="1"/>
</dbReference>
<dbReference type="PANTHER" id="PTHR12277:SF55">
    <property type="entry name" value="ALPHA_BETA HYDROLASE DOMAIN-CONTAINING PROTEIN 17C"/>
    <property type="match status" value="1"/>
</dbReference>
<dbReference type="Pfam" id="PF12146">
    <property type="entry name" value="Hydrolase_4"/>
    <property type="match status" value="1"/>
</dbReference>
<dbReference type="SUPFAM" id="SSF53474">
    <property type="entry name" value="alpha/beta-Hydrolases"/>
    <property type="match status" value="1"/>
</dbReference>
<comment type="function">
    <text evidence="3">Hydrolyzes fatty acids from S-acylated cysteine residues in proteins. Has depalmitoylating activity towards NRAS.</text>
</comment>
<comment type="catalytic activity">
    <reaction evidence="3">
        <text>S-hexadecanoyl-L-cysteinyl-[protein] + H2O = L-cysteinyl-[protein] + hexadecanoate + H(+)</text>
        <dbReference type="Rhea" id="RHEA:19233"/>
        <dbReference type="Rhea" id="RHEA-COMP:10131"/>
        <dbReference type="Rhea" id="RHEA-COMP:11032"/>
        <dbReference type="ChEBI" id="CHEBI:7896"/>
        <dbReference type="ChEBI" id="CHEBI:15377"/>
        <dbReference type="ChEBI" id="CHEBI:15378"/>
        <dbReference type="ChEBI" id="CHEBI:29950"/>
        <dbReference type="ChEBI" id="CHEBI:74151"/>
        <dbReference type="EC" id="3.1.2.22"/>
    </reaction>
</comment>
<comment type="subcellular location">
    <subcellularLocation>
        <location evidence="1">Recycling endosome membrane</location>
        <topology evidence="1">Lipid-anchor</topology>
        <orientation evidence="1">Cytoplasmic side</orientation>
    </subcellularLocation>
    <subcellularLocation>
        <location evidence="1">Cell projection</location>
        <location evidence="1">Dendritic spine</location>
    </subcellularLocation>
    <subcellularLocation>
        <location evidence="1">Postsynaptic density membrane</location>
    </subcellularLocation>
</comment>
<comment type="PTM">
    <text evidence="4">Palmitoylated on cysteine residues located in a cysteine cluster at the N-terminus which promotes membrane localization.</text>
</comment>
<comment type="similarity">
    <text evidence="8">Belongs to the AB hydrolase superfamily. ABHD17 family.</text>
</comment>
<protein>
    <recommendedName>
        <fullName evidence="8">Alpha/beta hydrolase domain-containing protein 17C</fullName>
        <shortName evidence="3">Abhydrolase domain-containing protein 17C</shortName>
        <ecNumber evidence="5">3.1.2.22</ecNumber>
    </recommendedName>
</protein>
<reference key="1">
    <citation type="submission" date="2004-07" db="EMBL/GenBank/DDBJ databases">
        <authorList>
            <consortium name="NIH - Xenopus Gene Collection (XGC) project"/>
        </authorList>
    </citation>
    <scope>NUCLEOTIDE SEQUENCE [LARGE SCALE MRNA]</scope>
    <source>
        <tissue>Lung</tissue>
    </source>
</reference>
<keyword id="KW-1003">Cell membrane</keyword>
<keyword id="KW-0966">Cell projection</keyword>
<keyword id="KW-0967">Endosome</keyword>
<keyword id="KW-0378">Hydrolase</keyword>
<keyword id="KW-0449">Lipoprotein</keyword>
<keyword id="KW-0472">Membrane</keyword>
<keyword id="KW-0564">Palmitate</keyword>
<keyword id="KW-0628">Postsynaptic cell membrane</keyword>
<keyword id="KW-1185">Reference proteome</keyword>
<keyword id="KW-0770">Synapse</keyword>
<sequence length="311" mass="34747">MPEQGPRMNGFSLGELCWLFCCPPCPSRIAAKLAFLPPEPTYTVREMEAPASTAQQPPREEGSGEPAACSLHLSERADWQYSQRELDAVEVFRWRTERGSFLGCMFVRCSPGSRYTLLFSHGNAVDLGQMCSFYIGLGTRINCNIFSYDYSGYGVSSGKPSEKNLYADIEAAWHALRTRYGVTPENIILYGQSIGTVPTVDLASRYECAAVILHSPLMSGLRVAFPDTRKTYCFDAFPSIDKISKVTSPVLIIHGTEDEVIDFSHGLAMYERCPRAVEPLWVEGAGHNDIELYAQYLERLKQFISHELPNS</sequence>
<proteinExistence type="evidence at transcript level"/>
<organism>
    <name type="scientific">Xenopus laevis</name>
    <name type="common">African clawed frog</name>
    <dbReference type="NCBI Taxonomy" id="8355"/>
    <lineage>
        <taxon>Eukaryota</taxon>
        <taxon>Metazoa</taxon>
        <taxon>Chordata</taxon>
        <taxon>Craniata</taxon>
        <taxon>Vertebrata</taxon>
        <taxon>Euteleostomi</taxon>
        <taxon>Amphibia</taxon>
        <taxon>Batrachia</taxon>
        <taxon>Anura</taxon>
        <taxon>Pipoidea</taxon>
        <taxon>Pipidae</taxon>
        <taxon>Xenopodinae</taxon>
        <taxon>Xenopus</taxon>
        <taxon>Xenopus</taxon>
    </lineage>
</organism>
<evidence type="ECO:0000250" key="1">
    <source>
        <dbReference type="UniProtKB" id="B5DFK7"/>
    </source>
</evidence>
<evidence type="ECO:0000250" key="2">
    <source>
        <dbReference type="UniProtKB" id="O75608"/>
    </source>
</evidence>
<evidence type="ECO:0000250" key="3">
    <source>
        <dbReference type="UniProtKB" id="Q6PCB6"/>
    </source>
</evidence>
<evidence type="ECO:0000250" key="4">
    <source>
        <dbReference type="UniProtKB" id="Q7M759"/>
    </source>
</evidence>
<evidence type="ECO:0000250" key="5">
    <source>
        <dbReference type="UniProtKB" id="Q8VCV1"/>
    </source>
</evidence>
<evidence type="ECO:0000250" key="6">
    <source>
        <dbReference type="UniProtKB" id="Q96GS6"/>
    </source>
</evidence>
<evidence type="ECO:0000256" key="7">
    <source>
        <dbReference type="SAM" id="MobiDB-lite"/>
    </source>
</evidence>
<evidence type="ECO:0000305" key="8"/>
<gene>
    <name evidence="3" type="primary">abhd17c</name>
</gene>
<accession>Q6DD70</accession>
<name>AB17C_XENLA</name>